<reference key="1">
    <citation type="journal article" date="2004" name="Science">
        <title>The Ashbya gossypii genome as a tool for mapping the ancient Saccharomyces cerevisiae genome.</title>
        <authorList>
            <person name="Dietrich F.S."/>
            <person name="Voegeli S."/>
            <person name="Brachat S."/>
            <person name="Lerch A."/>
            <person name="Gates K."/>
            <person name="Steiner S."/>
            <person name="Mohr C."/>
            <person name="Poehlmann R."/>
            <person name="Luedi P."/>
            <person name="Choi S."/>
            <person name="Wing R.A."/>
            <person name="Flavier A."/>
            <person name="Gaffney T.D."/>
            <person name="Philippsen P."/>
        </authorList>
    </citation>
    <scope>NUCLEOTIDE SEQUENCE [LARGE SCALE GENOMIC DNA]</scope>
    <source>
        <strain>ATCC 10895 / CBS 109.51 / FGSC 9923 / NRRL Y-1056</strain>
    </source>
</reference>
<reference key="2">
    <citation type="journal article" date="2013" name="G3 (Bethesda)">
        <title>Genomes of Ashbya fungi isolated from insects reveal four mating-type loci, numerous translocations, lack of transposons, and distinct gene duplications.</title>
        <authorList>
            <person name="Dietrich F.S."/>
            <person name="Voegeli S."/>
            <person name="Kuo S."/>
            <person name="Philippsen P."/>
        </authorList>
    </citation>
    <scope>GENOME REANNOTATION</scope>
    <source>
        <strain>ATCC 10895 / CBS 109.51 / FGSC 9923 / NRRL Y-1056</strain>
    </source>
</reference>
<keyword id="KW-0028">Amino-acid biosynthesis</keyword>
<keyword id="KW-0057">Aromatic amino acid biosynthesis</keyword>
<keyword id="KW-0067">ATP-binding</keyword>
<keyword id="KW-0963">Cytoplasm</keyword>
<keyword id="KW-0418">Kinase</keyword>
<keyword id="KW-0456">Lyase</keyword>
<keyword id="KW-0479">Metal-binding</keyword>
<keyword id="KW-0511">Multifunctional enzyme</keyword>
<keyword id="KW-0521">NADP</keyword>
<keyword id="KW-0547">Nucleotide-binding</keyword>
<keyword id="KW-0560">Oxidoreductase</keyword>
<keyword id="KW-1185">Reference proteome</keyword>
<keyword id="KW-0808">Transferase</keyword>
<keyword id="KW-0862">Zinc</keyword>
<feature type="chain" id="PRO_0000406702" description="Pentafunctional AROM polypeptide">
    <location>
        <begin position="1"/>
        <end position="1577"/>
    </location>
</feature>
<feature type="region of interest" description="3-dehydroquinate synthase">
    <location>
        <begin position="1"/>
        <end position="392"/>
    </location>
</feature>
<feature type="region of interest" description="EPSP synthase">
    <location>
        <begin position="405"/>
        <end position="863"/>
    </location>
</feature>
<feature type="region of interest" description="Shikimate kinase">
    <location>
        <begin position="882"/>
        <end position="1071"/>
    </location>
</feature>
<feature type="region of interest" description="3-dehydroquinase">
    <location>
        <begin position="1072"/>
        <end position="1284"/>
    </location>
</feature>
<feature type="region of interest" description="Shikimate dehydrogenase">
    <location>
        <begin position="1297"/>
        <end position="1577"/>
    </location>
</feature>
<feature type="active site" description="Proton acceptor; for 3-dehydroquinate synthase activity" evidence="1">
    <location>
        <position position="268"/>
    </location>
</feature>
<feature type="active site" description="Proton acceptor; for 3-dehydroquinate synthase activity" evidence="1">
    <location>
        <position position="283"/>
    </location>
</feature>
<feature type="active site" description="For EPSP synthase activity" evidence="1">
    <location>
        <position position="845"/>
    </location>
</feature>
<feature type="active site" description="Proton acceptor; for 3-dehydroquinate dehydratase activity" evidence="1">
    <location>
        <position position="1189"/>
    </location>
</feature>
<feature type="active site" description="Schiff-base intermediate with substrate; for 3-dehydroquinate dehydratase activity" evidence="1">
    <location>
        <position position="1218"/>
    </location>
</feature>
<feature type="binding site" evidence="1">
    <location>
        <begin position="80"/>
        <end position="83"/>
    </location>
    <ligand>
        <name>NAD(+)</name>
        <dbReference type="ChEBI" id="CHEBI:57540"/>
    </ligand>
</feature>
<feature type="binding site" evidence="1">
    <location>
        <begin position="111"/>
        <end position="113"/>
    </location>
    <ligand>
        <name>NAD(+)</name>
        <dbReference type="ChEBI" id="CHEBI:57540"/>
    </ligand>
</feature>
<feature type="binding site" evidence="1">
    <location>
        <position position="116"/>
    </location>
    <ligand>
        <name>NAD(+)</name>
        <dbReference type="ChEBI" id="CHEBI:57540"/>
    </ligand>
</feature>
<feature type="binding site" evidence="1">
    <location>
        <position position="127"/>
    </location>
    <ligand>
        <name>7-phospho-2-dehydro-3-deoxy-D-arabino-heptonate</name>
        <dbReference type="ChEBI" id="CHEBI:58394"/>
    </ligand>
</feature>
<feature type="binding site" evidence="1">
    <location>
        <begin position="136"/>
        <end position="137"/>
    </location>
    <ligand>
        <name>NAD(+)</name>
        <dbReference type="ChEBI" id="CHEBI:57540"/>
    </ligand>
</feature>
<feature type="binding site" evidence="1">
    <location>
        <position position="143"/>
    </location>
    <ligand>
        <name>7-phospho-2-dehydro-3-deoxy-D-arabino-heptonate</name>
        <dbReference type="ChEBI" id="CHEBI:58394"/>
    </ligand>
</feature>
<feature type="binding site" evidence="1">
    <location>
        <position position="149"/>
    </location>
    <ligand>
        <name>7-phospho-2-dehydro-3-deoxy-D-arabino-heptonate</name>
        <dbReference type="ChEBI" id="CHEBI:58394"/>
    </ligand>
</feature>
<feature type="binding site" evidence="1">
    <location>
        <position position="158"/>
    </location>
    <ligand>
        <name>NAD(+)</name>
        <dbReference type="ChEBI" id="CHEBI:57540"/>
    </ligand>
</feature>
<feature type="binding site" evidence="1">
    <location>
        <position position="159"/>
    </location>
    <ligand>
        <name>7-phospho-2-dehydro-3-deoxy-D-arabino-heptonate</name>
        <dbReference type="ChEBI" id="CHEBI:58394"/>
    </ligand>
</feature>
<feature type="binding site" evidence="1">
    <location>
        <begin position="176"/>
        <end position="179"/>
    </location>
    <ligand>
        <name>NAD(+)</name>
        <dbReference type="ChEBI" id="CHEBI:57540"/>
    </ligand>
</feature>
<feature type="binding site" evidence="1">
    <location>
        <position position="187"/>
    </location>
    <ligand>
        <name>NAD(+)</name>
        <dbReference type="ChEBI" id="CHEBI:57540"/>
    </ligand>
</feature>
<feature type="binding site" evidence="1">
    <location>
        <begin position="191"/>
        <end position="194"/>
    </location>
    <ligand>
        <name>7-phospho-2-dehydro-3-deoxy-D-arabino-heptonate</name>
        <dbReference type="ChEBI" id="CHEBI:58394"/>
    </ligand>
</feature>
<feature type="binding site" evidence="1">
    <location>
        <position position="191"/>
    </location>
    <ligand>
        <name>Zn(2+)</name>
        <dbReference type="ChEBI" id="CHEBI:29105"/>
        <note>catalytic</note>
    </ligand>
</feature>
<feature type="binding site" evidence="1">
    <location>
        <position position="258"/>
    </location>
    <ligand>
        <name>7-phospho-2-dehydro-3-deoxy-D-arabino-heptonate</name>
        <dbReference type="ChEBI" id="CHEBI:58394"/>
    </ligand>
</feature>
<feature type="binding site" evidence="1">
    <location>
        <begin position="272"/>
        <end position="276"/>
    </location>
    <ligand>
        <name>7-phospho-2-dehydro-3-deoxy-D-arabino-heptonate</name>
        <dbReference type="ChEBI" id="CHEBI:58394"/>
    </ligand>
</feature>
<feature type="binding site" evidence="1">
    <location>
        <position position="279"/>
    </location>
    <ligand>
        <name>7-phospho-2-dehydro-3-deoxy-D-arabino-heptonate</name>
        <dbReference type="ChEBI" id="CHEBI:58394"/>
    </ligand>
</feature>
<feature type="binding site" evidence="1">
    <location>
        <position position="279"/>
    </location>
    <ligand>
        <name>Zn(2+)</name>
        <dbReference type="ChEBI" id="CHEBI:29105"/>
        <note>catalytic</note>
    </ligand>
</feature>
<feature type="binding site" evidence="1">
    <location>
        <position position="295"/>
    </location>
    <ligand>
        <name>7-phospho-2-dehydro-3-deoxy-D-arabino-heptonate</name>
        <dbReference type="ChEBI" id="CHEBI:58394"/>
    </ligand>
</feature>
<feature type="binding site" evidence="1">
    <location>
        <position position="295"/>
    </location>
    <ligand>
        <name>Zn(2+)</name>
        <dbReference type="ChEBI" id="CHEBI:29105"/>
        <note>catalytic</note>
    </ligand>
</feature>
<feature type="binding site" evidence="1">
    <location>
        <position position="364"/>
    </location>
    <ligand>
        <name>7-phospho-2-dehydro-3-deoxy-D-arabino-heptonate</name>
        <dbReference type="ChEBI" id="CHEBI:58394"/>
    </ligand>
</feature>
<feature type="binding site" evidence="1">
    <location>
        <begin position="886"/>
        <end position="893"/>
    </location>
    <ligand>
        <name>ATP</name>
        <dbReference type="ChEBI" id="CHEBI:30616"/>
    </ligand>
</feature>
<comment type="function">
    <text evidence="1">The AROM polypeptide catalyzes 5 consecutive enzymatic reactions in prechorismate polyaromatic amino acid biosynthesis.</text>
</comment>
<comment type="catalytic activity">
    <reaction evidence="1">
        <text>7-phospho-2-dehydro-3-deoxy-D-arabino-heptonate = 3-dehydroquinate + phosphate</text>
        <dbReference type="Rhea" id="RHEA:21968"/>
        <dbReference type="ChEBI" id="CHEBI:32364"/>
        <dbReference type="ChEBI" id="CHEBI:43474"/>
        <dbReference type="ChEBI" id="CHEBI:58394"/>
        <dbReference type="EC" id="4.2.3.4"/>
    </reaction>
</comment>
<comment type="catalytic activity">
    <reaction evidence="1">
        <text>3-dehydroquinate = 3-dehydroshikimate + H2O</text>
        <dbReference type="Rhea" id="RHEA:21096"/>
        <dbReference type="ChEBI" id="CHEBI:15377"/>
        <dbReference type="ChEBI" id="CHEBI:16630"/>
        <dbReference type="ChEBI" id="CHEBI:32364"/>
        <dbReference type="EC" id="4.2.1.10"/>
    </reaction>
</comment>
<comment type="catalytic activity">
    <reaction evidence="1">
        <text>shikimate + NADP(+) = 3-dehydroshikimate + NADPH + H(+)</text>
        <dbReference type="Rhea" id="RHEA:17737"/>
        <dbReference type="ChEBI" id="CHEBI:15378"/>
        <dbReference type="ChEBI" id="CHEBI:16630"/>
        <dbReference type="ChEBI" id="CHEBI:36208"/>
        <dbReference type="ChEBI" id="CHEBI:57783"/>
        <dbReference type="ChEBI" id="CHEBI:58349"/>
        <dbReference type="EC" id="1.1.1.25"/>
    </reaction>
</comment>
<comment type="catalytic activity">
    <reaction evidence="1">
        <text>shikimate + ATP = 3-phosphoshikimate + ADP + H(+)</text>
        <dbReference type="Rhea" id="RHEA:13121"/>
        <dbReference type="ChEBI" id="CHEBI:15378"/>
        <dbReference type="ChEBI" id="CHEBI:30616"/>
        <dbReference type="ChEBI" id="CHEBI:36208"/>
        <dbReference type="ChEBI" id="CHEBI:145989"/>
        <dbReference type="ChEBI" id="CHEBI:456216"/>
        <dbReference type="EC" id="2.7.1.71"/>
    </reaction>
</comment>
<comment type="catalytic activity">
    <reaction evidence="1">
        <text>3-phosphoshikimate + phosphoenolpyruvate = 5-O-(1-carboxyvinyl)-3-phosphoshikimate + phosphate</text>
        <dbReference type="Rhea" id="RHEA:21256"/>
        <dbReference type="ChEBI" id="CHEBI:43474"/>
        <dbReference type="ChEBI" id="CHEBI:57701"/>
        <dbReference type="ChEBI" id="CHEBI:58702"/>
        <dbReference type="ChEBI" id="CHEBI:145989"/>
        <dbReference type="EC" id="2.5.1.19"/>
    </reaction>
</comment>
<comment type="cofactor">
    <cofactor>
        <name>Zn(2+)</name>
        <dbReference type="ChEBI" id="CHEBI:29105"/>
    </cofactor>
    <text>Binds 2 Zn(2+) ions per subunit.</text>
</comment>
<comment type="pathway">
    <text evidence="1">Metabolic intermediate biosynthesis; chorismate biosynthesis; chorismate from D-erythrose 4-phosphate and phosphoenolpyruvate: step 2/7.</text>
</comment>
<comment type="pathway">
    <text evidence="1">Metabolic intermediate biosynthesis; chorismate biosynthesis; chorismate from D-erythrose 4-phosphate and phosphoenolpyruvate: step 3/7.</text>
</comment>
<comment type="pathway">
    <text evidence="1">Metabolic intermediate biosynthesis; chorismate biosynthesis; chorismate from D-erythrose 4-phosphate and phosphoenolpyruvate: step 4/7.</text>
</comment>
<comment type="pathway">
    <text evidence="1">Metabolic intermediate biosynthesis; chorismate biosynthesis; chorismate from D-erythrose 4-phosphate and phosphoenolpyruvate: step 5/7.</text>
</comment>
<comment type="pathway">
    <text evidence="1">Metabolic intermediate biosynthesis; chorismate biosynthesis; chorismate from D-erythrose 4-phosphate and phosphoenolpyruvate: step 6/7.</text>
</comment>
<comment type="subunit">
    <text evidence="1">Homodimer.</text>
</comment>
<comment type="subcellular location">
    <subcellularLocation>
        <location evidence="1">Cytoplasm</location>
    </subcellularLocation>
</comment>
<comment type="similarity">
    <text evidence="1">In the N-terminal section; belongs to the sugar phosphate cyclases superfamily. Dehydroquinate synthase family.</text>
</comment>
<comment type="similarity">
    <text evidence="1">In the 2nd section; belongs to the EPSP synthase family.</text>
</comment>
<comment type="similarity">
    <text evidence="1">In the 3rd section; belongs to the shikimate kinase family.</text>
</comment>
<comment type="similarity">
    <text evidence="1">In the 4th section; belongs to the type-I 3-dehydroquinase family.</text>
</comment>
<comment type="similarity">
    <text evidence="1">In the C-terminal section; belongs to the shikimate dehydrogenase family.</text>
</comment>
<accession>Q74ZZ1</accession>
<protein>
    <recommendedName>
        <fullName evidence="1">Pentafunctional AROM polypeptide</fullName>
    </recommendedName>
    <domain>
        <recommendedName>
            <fullName evidence="1">3-dehydroquinate synthase</fullName>
            <shortName evidence="1">DHQS</shortName>
            <ecNumber evidence="1">4.2.3.4</ecNumber>
        </recommendedName>
    </domain>
    <domain>
        <recommendedName>
            <fullName evidence="1">3-phosphoshikimate 1-carboxyvinyltransferase</fullName>
            <ecNumber evidence="1">2.5.1.19</ecNumber>
        </recommendedName>
        <alternativeName>
            <fullName evidence="1">5-enolpyruvylshikimate-3-phosphate synthase</fullName>
            <shortName evidence="1">EPSP synthase</shortName>
            <shortName evidence="1">EPSPS</shortName>
        </alternativeName>
    </domain>
    <domain>
        <recommendedName>
            <fullName evidence="1">Shikimate kinase</fullName>
            <shortName evidence="1">SK</shortName>
            <ecNumber evidence="1">2.7.1.71</ecNumber>
        </recommendedName>
    </domain>
    <domain>
        <recommendedName>
            <fullName evidence="1">3-dehydroquinate dehydratase</fullName>
            <shortName evidence="1">3-dehydroquinase</shortName>
            <ecNumber evidence="1">4.2.1.10</ecNumber>
        </recommendedName>
    </domain>
    <domain>
        <recommendedName>
            <fullName evidence="1">Shikimate dehydrogenase</fullName>
            <ecNumber evidence="1">1.1.1.25</ecNumber>
        </recommendedName>
    </domain>
</protein>
<name>ARO1_EREGS</name>
<evidence type="ECO:0000255" key="1">
    <source>
        <dbReference type="HAMAP-Rule" id="MF_03143"/>
    </source>
</evidence>
<organism>
    <name type="scientific">Eremothecium gossypii (strain ATCC 10895 / CBS 109.51 / FGSC 9923 / NRRL Y-1056)</name>
    <name type="common">Yeast</name>
    <name type="synonym">Ashbya gossypii</name>
    <dbReference type="NCBI Taxonomy" id="284811"/>
    <lineage>
        <taxon>Eukaryota</taxon>
        <taxon>Fungi</taxon>
        <taxon>Dikarya</taxon>
        <taxon>Ascomycota</taxon>
        <taxon>Saccharomycotina</taxon>
        <taxon>Saccharomycetes</taxon>
        <taxon>Saccharomycetales</taxon>
        <taxon>Saccharomycetaceae</taxon>
        <taxon>Eremothecium</taxon>
    </lineage>
</organism>
<gene>
    <name evidence="1" type="primary">ARO1</name>
    <name type="ordered locus">AGR066W</name>
</gene>
<proteinExistence type="inferred from homology"/>
<dbReference type="EC" id="4.2.3.4" evidence="1"/>
<dbReference type="EC" id="2.5.1.19" evidence="1"/>
<dbReference type="EC" id="2.7.1.71" evidence="1"/>
<dbReference type="EC" id="4.2.1.10" evidence="1"/>
<dbReference type="EC" id="1.1.1.25" evidence="1"/>
<dbReference type="EMBL" id="AE016820">
    <property type="protein sequence ID" value="AAS54555.2"/>
    <property type="molecule type" value="Genomic_DNA"/>
</dbReference>
<dbReference type="RefSeq" id="NP_986731.2">
    <property type="nucleotide sequence ID" value="NM_211793.2"/>
</dbReference>
<dbReference type="SMR" id="Q74ZZ1"/>
<dbReference type="FunCoup" id="Q74ZZ1">
    <property type="interactions" value="519"/>
</dbReference>
<dbReference type="STRING" id="284811.Q74ZZ1"/>
<dbReference type="EnsemblFungi" id="AAS54555">
    <property type="protein sequence ID" value="AAS54555"/>
    <property type="gene ID" value="AGOS_AGR066W"/>
</dbReference>
<dbReference type="GeneID" id="4623032"/>
<dbReference type="KEGG" id="ago:AGOS_AGR066W"/>
<dbReference type="eggNOG" id="KOG0692">
    <property type="taxonomic scope" value="Eukaryota"/>
</dbReference>
<dbReference type="HOGENOM" id="CLU_001201_1_2_1"/>
<dbReference type="InParanoid" id="Q74ZZ1"/>
<dbReference type="OMA" id="SWANMSW"/>
<dbReference type="OrthoDB" id="197068at2759"/>
<dbReference type="UniPathway" id="UPA00053">
    <property type="reaction ID" value="UER00085"/>
</dbReference>
<dbReference type="UniPathway" id="UPA00053">
    <property type="reaction ID" value="UER00086"/>
</dbReference>
<dbReference type="UniPathway" id="UPA00053">
    <property type="reaction ID" value="UER00087"/>
</dbReference>
<dbReference type="UniPathway" id="UPA00053">
    <property type="reaction ID" value="UER00088"/>
</dbReference>
<dbReference type="UniPathway" id="UPA00053">
    <property type="reaction ID" value="UER00089"/>
</dbReference>
<dbReference type="Proteomes" id="UP000000591">
    <property type="component" value="Chromosome VII"/>
</dbReference>
<dbReference type="GO" id="GO:0005737">
    <property type="term" value="C:cytoplasm"/>
    <property type="evidence" value="ECO:0007669"/>
    <property type="project" value="UniProtKB-SubCell"/>
</dbReference>
<dbReference type="GO" id="GO:0003855">
    <property type="term" value="F:3-dehydroquinate dehydratase activity"/>
    <property type="evidence" value="ECO:0000318"/>
    <property type="project" value="GO_Central"/>
</dbReference>
<dbReference type="GO" id="GO:0003856">
    <property type="term" value="F:3-dehydroquinate synthase activity"/>
    <property type="evidence" value="ECO:0007669"/>
    <property type="project" value="UniProtKB-UniRule"/>
</dbReference>
<dbReference type="GO" id="GO:0003866">
    <property type="term" value="F:3-phosphoshikimate 1-carboxyvinyltransferase activity"/>
    <property type="evidence" value="ECO:0000318"/>
    <property type="project" value="GO_Central"/>
</dbReference>
<dbReference type="GO" id="GO:0005524">
    <property type="term" value="F:ATP binding"/>
    <property type="evidence" value="ECO:0007669"/>
    <property type="project" value="UniProtKB-UniRule"/>
</dbReference>
<dbReference type="GO" id="GO:0046872">
    <property type="term" value="F:metal ion binding"/>
    <property type="evidence" value="ECO:0007669"/>
    <property type="project" value="UniProtKB-UniRule"/>
</dbReference>
<dbReference type="GO" id="GO:0004764">
    <property type="term" value="F:shikimate 3-dehydrogenase (NADP+) activity"/>
    <property type="evidence" value="ECO:0000318"/>
    <property type="project" value="GO_Central"/>
</dbReference>
<dbReference type="GO" id="GO:0004765">
    <property type="term" value="F:shikimate kinase activity"/>
    <property type="evidence" value="ECO:0000318"/>
    <property type="project" value="GO_Central"/>
</dbReference>
<dbReference type="GO" id="GO:0008652">
    <property type="term" value="P:amino acid biosynthetic process"/>
    <property type="evidence" value="ECO:0007669"/>
    <property type="project" value="UniProtKB-KW"/>
</dbReference>
<dbReference type="GO" id="GO:0009073">
    <property type="term" value="P:aromatic amino acid family biosynthetic process"/>
    <property type="evidence" value="ECO:0007669"/>
    <property type="project" value="UniProtKB-UniRule"/>
</dbReference>
<dbReference type="GO" id="GO:0009423">
    <property type="term" value="P:chorismate biosynthetic process"/>
    <property type="evidence" value="ECO:0000318"/>
    <property type="project" value="GO_Central"/>
</dbReference>
<dbReference type="CDD" id="cd00502">
    <property type="entry name" value="DHQase_I"/>
    <property type="match status" value="1"/>
</dbReference>
<dbReference type="CDD" id="cd08195">
    <property type="entry name" value="DHQS"/>
    <property type="match status" value="1"/>
</dbReference>
<dbReference type="CDD" id="cd01556">
    <property type="entry name" value="EPSP_synthase"/>
    <property type="match status" value="1"/>
</dbReference>
<dbReference type="CDD" id="cd01065">
    <property type="entry name" value="NAD_bind_Shikimate_DH"/>
    <property type="match status" value="1"/>
</dbReference>
<dbReference type="CDD" id="cd00464">
    <property type="entry name" value="SK"/>
    <property type="match status" value="1"/>
</dbReference>
<dbReference type="FunFam" id="1.20.1090.10:FF:000007">
    <property type="entry name" value="Pentafunctional AROM polypeptide"/>
    <property type="match status" value="1"/>
</dbReference>
<dbReference type="FunFam" id="3.20.20.70:FF:000135">
    <property type="entry name" value="Pentafunctional AROM polypeptide"/>
    <property type="match status" value="1"/>
</dbReference>
<dbReference type="FunFam" id="3.40.50.1970:FF:000007">
    <property type="entry name" value="Pentafunctional AROM polypeptide"/>
    <property type="match status" value="1"/>
</dbReference>
<dbReference type="FunFam" id="3.40.50.300:FF:001256">
    <property type="entry name" value="Pentafunctional AROM polypeptide"/>
    <property type="match status" value="1"/>
</dbReference>
<dbReference type="FunFam" id="3.40.50.720:FF:000484">
    <property type="entry name" value="Pentafunctional AROM polypeptide"/>
    <property type="match status" value="1"/>
</dbReference>
<dbReference type="FunFam" id="3.65.10.10:FF:000007">
    <property type="entry name" value="Pentafunctional AROM polypeptide"/>
    <property type="match status" value="1"/>
</dbReference>
<dbReference type="Gene3D" id="3.40.50.1970">
    <property type="match status" value="1"/>
</dbReference>
<dbReference type="Gene3D" id="3.20.20.70">
    <property type="entry name" value="Aldolase class I"/>
    <property type="match status" value="1"/>
</dbReference>
<dbReference type="Gene3D" id="1.20.1090.10">
    <property type="entry name" value="Dehydroquinate synthase-like - alpha domain"/>
    <property type="match status" value="1"/>
</dbReference>
<dbReference type="Gene3D" id="3.65.10.10">
    <property type="entry name" value="Enolpyruvate transferase domain"/>
    <property type="match status" value="2"/>
</dbReference>
<dbReference type="Gene3D" id="3.40.50.10860">
    <property type="entry name" value="Leucine Dehydrogenase, chain A, domain 1"/>
    <property type="match status" value="1"/>
</dbReference>
<dbReference type="Gene3D" id="3.40.50.720">
    <property type="entry name" value="NAD(P)-binding Rossmann-like Domain"/>
    <property type="match status" value="1"/>
</dbReference>
<dbReference type="Gene3D" id="3.40.50.300">
    <property type="entry name" value="P-loop containing nucleotide triphosphate hydrolases"/>
    <property type="match status" value="1"/>
</dbReference>
<dbReference type="HAMAP" id="MF_00210">
    <property type="entry name" value="EPSP_synth"/>
    <property type="match status" value="1"/>
</dbReference>
<dbReference type="HAMAP" id="MF_03143">
    <property type="entry name" value="Pentafunct_AroM"/>
    <property type="match status" value="1"/>
</dbReference>
<dbReference type="HAMAP" id="MF_00109">
    <property type="entry name" value="Shikimate_kinase"/>
    <property type="match status" value="1"/>
</dbReference>
<dbReference type="InterPro" id="IPR018508">
    <property type="entry name" value="3-dehydroquinate_DH_AS"/>
</dbReference>
<dbReference type="InterPro" id="IPR013785">
    <property type="entry name" value="Aldolase_TIM"/>
</dbReference>
<dbReference type="InterPro" id="IPR046346">
    <property type="entry name" value="Aminoacid_DH-like_N_sf"/>
</dbReference>
<dbReference type="InterPro" id="IPR016037">
    <property type="entry name" value="DHQ_synth_AroB"/>
</dbReference>
<dbReference type="InterPro" id="IPR030960">
    <property type="entry name" value="DHQS/DOIS_N"/>
</dbReference>
<dbReference type="InterPro" id="IPR056179">
    <property type="entry name" value="DHQS_C"/>
</dbReference>
<dbReference type="InterPro" id="IPR001381">
    <property type="entry name" value="DHquinase_I"/>
</dbReference>
<dbReference type="InterPro" id="IPR001986">
    <property type="entry name" value="Enolpyruvate_Tfrase_dom"/>
</dbReference>
<dbReference type="InterPro" id="IPR036968">
    <property type="entry name" value="Enolpyruvate_Tfrase_sf"/>
</dbReference>
<dbReference type="InterPro" id="IPR006264">
    <property type="entry name" value="EPSP_synthase"/>
</dbReference>
<dbReference type="InterPro" id="IPR023193">
    <property type="entry name" value="EPSP_synthase_CS"/>
</dbReference>
<dbReference type="InterPro" id="IPR036291">
    <property type="entry name" value="NAD(P)-bd_dom_sf"/>
</dbReference>
<dbReference type="InterPro" id="IPR027417">
    <property type="entry name" value="P-loop_NTPase"/>
</dbReference>
<dbReference type="InterPro" id="IPR008289">
    <property type="entry name" value="Pentafunct_AroM"/>
</dbReference>
<dbReference type="InterPro" id="IPR013792">
    <property type="entry name" value="RNA3'P_cycl/enolpyr_Trfase_a/b"/>
</dbReference>
<dbReference type="InterPro" id="IPR041121">
    <property type="entry name" value="SDH_C"/>
</dbReference>
<dbReference type="InterPro" id="IPR031322">
    <property type="entry name" value="Shikimate/glucono_kinase"/>
</dbReference>
<dbReference type="InterPro" id="IPR013708">
    <property type="entry name" value="Shikimate_DH-bd_N"/>
</dbReference>
<dbReference type="InterPro" id="IPR010110">
    <property type="entry name" value="Shikimate_DH_AroM-type"/>
</dbReference>
<dbReference type="InterPro" id="IPR000623">
    <property type="entry name" value="Shikimate_kinase/TSH1"/>
</dbReference>
<dbReference type="InterPro" id="IPR023000">
    <property type="entry name" value="Shikimate_kinase_CS"/>
</dbReference>
<dbReference type="NCBIfam" id="TIGR01356">
    <property type="entry name" value="aroA"/>
    <property type="match status" value="1"/>
</dbReference>
<dbReference type="NCBIfam" id="TIGR01357">
    <property type="entry name" value="aroB"/>
    <property type="match status" value="1"/>
</dbReference>
<dbReference type="NCBIfam" id="TIGR01093">
    <property type="entry name" value="aroD"/>
    <property type="match status" value="1"/>
</dbReference>
<dbReference type="NCBIfam" id="TIGR01809">
    <property type="entry name" value="Shik-DH-AROM"/>
    <property type="match status" value="1"/>
</dbReference>
<dbReference type="PANTHER" id="PTHR21090">
    <property type="entry name" value="AROM/DEHYDROQUINATE SYNTHASE"/>
    <property type="match status" value="1"/>
</dbReference>
<dbReference type="PANTHER" id="PTHR21090:SF5">
    <property type="entry name" value="PENTAFUNCTIONAL AROM POLYPEPTIDE"/>
    <property type="match status" value="1"/>
</dbReference>
<dbReference type="Pfam" id="PF01761">
    <property type="entry name" value="DHQ_synthase"/>
    <property type="match status" value="1"/>
</dbReference>
<dbReference type="Pfam" id="PF24621">
    <property type="entry name" value="DHQS_C"/>
    <property type="match status" value="1"/>
</dbReference>
<dbReference type="Pfam" id="PF01487">
    <property type="entry name" value="DHquinase_I"/>
    <property type="match status" value="1"/>
</dbReference>
<dbReference type="Pfam" id="PF00275">
    <property type="entry name" value="EPSP_synthase"/>
    <property type="match status" value="1"/>
</dbReference>
<dbReference type="Pfam" id="PF18317">
    <property type="entry name" value="SDH_C"/>
    <property type="match status" value="1"/>
</dbReference>
<dbReference type="Pfam" id="PF08501">
    <property type="entry name" value="Shikimate_dh_N"/>
    <property type="match status" value="1"/>
</dbReference>
<dbReference type="Pfam" id="PF01202">
    <property type="entry name" value="SKI"/>
    <property type="match status" value="1"/>
</dbReference>
<dbReference type="PIRSF" id="PIRSF000514">
    <property type="entry name" value="Pentafunct_AroM"/>
    <property type="match status" value="1"/>
</dbReference>
<dbReference type="PRINTS" id="PR01100">
    <property type="entry name" value="SHIKIMTKNASE"/>
</dbReference>
<dbReference type="SUPFAM" id="SSF51569">
    <property type="entry name" value="Aldolase"/>
    <property type="match status" value="1"/>
</dbReference>
<dbReference type="SUPFAM" id="SSF53223">
    <property type="entry name" value="Aminoacid dehydrogenase-like, N-terminal domain"/>
    <property type="match status" value="1"/>
</dbReference>
<dbReference type="SUPFAM" id="SSF56796">
    <property type="entry name" value="Dehydroquinate synthase-like"/>
    <property type="match status" value="1"/>
</dbReference>
<dbReference type="SUPFAM" id="SSF55205">
    <property type="entry name" value="EPT/RTPC-like"/>
    <property type="match status" value="1"/>
</dbReference>
<dbReference type="SUPFAM" id="SSF51735">
    <property type="entry name" value="NAD(P)-binding Rossmann-fold domains"/>
    <property type="match status" value="1"/>
</dbReference>
<dbReference type="SUPFAM" id="SSF52540">
    <property type="entry name" value="P-loop containing nucleoside triphosphate hydrolases"/>
    <property type="match status" value="1"/>
</dbReference>
<dbReference type="PROSITE" id="PS01028">
    <property type="entry name" value="DEHYDROQUINASE_I"/>
    <property type="match status" value="1"/>
</dbReference>
<dbReference type="PROSITE" id="PS00104">
    <property type="entry name" value="EPSP_SYNTHASE_1"/>
    <property type="match status" value="1"/>
</dbReference>
<dbReference type="PROSITE" id="PS00885">
    <property type="entry name" value="EPSP_SYNTHASE_2"/>
    <property type="match status" value="1"/>
</dbReference>
<dbReference type="PROSITE" id="PS01128">
    <property type="entry name" value="SHIKIMATE_KINASE"/>
    <property type="match status" value="1"/>
</dbReference>
<sequence length="1577" mass="173764">MASVGLEKVNILGRDSIHVGYDLRAHIARTVFESCVSSTYVVVSDANVARVPYHEALCAALEEGLPARSRMLRYVVQPGETYKTRETKGEIEDFMLAEGCTRDTVVLAVGGGVIGDMVGFVAATFMRGVRFVQVPTSLLAMVDSSIGGKTAVDTPAGKNFIGSFWQPEFVFVDVKWLETLPRREFINGMAEVIKTACIWNAAEFMRLEMHASMFLQVVNSSKQVKVDTKGGPTSLSYTNITQILDHVFQLVLESIKVKAHVVSSDERESGLRNLLNFGHSIGHAYEALLTPQALHGECVSIGMVKEAELSRYLNILSPTQVARLTKVLSAYGLPTSVNEGWFRELTLGKRTPLEVLLRKMSIDKKNDGSNKKVVLLETIGKCYGTSAHVVSDTDLRFVLTDEALVYPFTDVRSSTGHTIVPPGSKSISNRALILAALGKGKCRIRNLLHSDDTKHMLEAVQQLNAATISWEDNGDTVVIDGHGGRTLTASDLPLYLGNAGTASRFLASVASLVCPEGNRDSVILTGNARMQERPIGPLVESLRLNGVRVDYLNREGSLPIKVHAESKFRGGRINLEASISSQYVSSILMCAPYAEEPVTLSLDGKPISELYIEMTIRMMEKFGIKVEKSNDELYTYHIPRGQYVNPAEYVIESDASSATYPLAFAALTGTTVTIPNIGHDSLQGDSRFACDVLKPMGCTVQQTATSTTVTGPEPGTLKPLEHVDMEPMTDAFLTACVVAAAAHSPESKCKNIITITGIANQRVKECNRILAMVTQLSKFGVTAEELPDGIQVHGVEQLSQLKVPDAVETYDDHRVAMSFSLLAGMVNYGQAPSSCRPIKILERRCTGKTWPGWWDVLHSRLGATLDGNEPLPEKENDIRKSVVLIGMRAAGKSTVGRWCAEALGYKLLDLDDEFQTYFGMGTVKEFVAQNGWESFRSKETDLFGHVLNKYSRSGYVISTGGGIVETASSRKLLQDFAATGGVVLHLYRDIDETIKFLRTDPTRPAYIEEVRGVWDRREKWYHLCSSYSFFSPHCSTTAEFEGLRRVFSKFIRRITGMLPVEVPVKRSTFVCLTFQNLLPEMERIKEAVYGCEAVEVRVDHLENYSQDFVLKQLTALRLATDSLPIVFTIRTKKQGGKFLDNDYSTLEDLLTVGLKAGVEFLDLELTLPSPIHQRILNKRYKTRIIGSHHDFSGEFSWEHPEWEHRYAQALAMQVDAIKFVATAKGFGDNLSLEEFRSKHTDKPLIAINMRECGKLSRVLNTILTPITSDVLPQAAAPGQLTLRQINELYASIGGLRPKKMFVVGSPIGHSRSPILHNTGYNSLGLPYTFDKFETDSAEIVKKSLLSREDLGGIAVTIPLKQDIMQYLDELTDSAKCIGAVNTIIPKKDGRFIGHNTDWLGIKNSLIANGVPEHVNTAGLIVGSGGTARAAAYAFHEMQCSTIYMINRTTSNLTELQKSFPQEFNIHVIESLEQIEQLSEPVGIAVSCVPSDKPLDDALSQKLSAFLSRPSATNFIPTILDAAYKPLVTPVLKLASEVHGWRPVSGAQMLVHQGVAQFEIWTGFKAPFAPVYDAVTQE</sequence>